<dbReference type="EMBL" id="BA000022">
    <property type="protein sequence ID" value="BAA17357.1"/>
    <property type="status" value="ALT_INIT"/>
    <property type="molecule type" value="Genomic_DNA"/>
</dbReference>
<dbReference type="PIR" id="S77510">
    <property type="entry name" value="S77510"/>
</dbReference>
<dbReference type="SMR" id="P73327"/>
<dbReference type="STRING" id="1148.gene:10498220"/>
<dbReference type="PaxDb" id="1148-1652435"/>
<dbReference type="EnsemblBacteria" id="BAA17357">
    <property type="protein sequence ID" value="BAA17357"/>
    <property type="gene ID" value="BAA17357"/>
</dbReference>
<dbReference type="KEGG" id="syn:slr1899"/>
<dbReference type="eggNOG" id="COG0830">
    <property type="taxonomic scope" value="Bacteria"/>
</dbReference>
<dbReference type="InParanoid" id="P73327"/>
<dbReference type="PhylomeDB" id="P73327"/>
<dbReference type="Proteomes" id="UP000001425">
    <property type="component" value="Chromosome"/>
</dbReference>
<dbReference type="GO" id="GO:0005737">
    <property type="term" value="C:cytoplasm"/>
    <property type="evidence" value="ECO:0007669"/>
    <property type="project" value="UniProtKB-SubCell"/>
</dbReference>
<dbReference type="GO" id="GO:0016151">
    <property type="term" value="F:nickel cation binding"/>
    <property type="evidence" value="ECO:0007669"/>
    <property type="project" value="UniProtKB-UniRule"/>
</dbReference>
<dbReference type="Gene3D" id="1.10.4190.10">
    <property type="entry name" value="Urease accessory protein UreF"/>
    <property type="match status" value="1"/>
</dbReference>
<dbReference type="HAMAP" id="MF_01385">
    <property type="entry name" value="UreF"/>
    <property type="match status" value="1"/>
</dbReference>
<dbReference type="InterPro" id="IPR002639">
    <property type="entry name" value="UreF"/>
</dbReference>
<dbReference type="InterPro" id="IPR038277">
    <property type="entry name" value="UreF_sf"/>
</dbReference>
<dbReference type="PANTHER" id="PTHR33620">
    <property type="entry name" value="UREASE ACCESSORY PROTEIN F"/>
    <property type="match status" value="1"/>
</dbReference>
<dbReference type="PANTHER" id="PTHR33620:SF1">
    <property type="entry name" value="UREASE ACCESSORY PROTEIN F"/>
    <property type="match status" value="1"/>
</dbReference>
<dbReference type="Pfam" id="PF01730">
    <property type="entry name" value="UreF"/>
    <property type="match status" value="1"/>
</dbReference>
<dbReference type="PIRSF" id="PIRSF009467">
    <property type="entry name" value="Ureas_acces_UreF"/>
    <property type="match status" value="1"/>
</dbReference>
<sequence>MLSGSAQLKLLQLVSPTLPVGAYNYSEGLEWLIERGNITNADTLGAWITQELCRGSITVDTAIMVRAHRLAGQMPKTDILPSPTLKHLSYWNQWLTATRESRELREQSLQMGGSLRKLLLDLEPTVQSWFEPIPPTEPCNYAIAFGLGAAFWGIDLHQSGLGYLHSWANNLISAGLRLIPLGQTAGQKLLLHLTPTILHQWQQILLLGDDDLYSCSWGLALASMGHESQYTRLFRS</sequence>
<organism>
    <name type="scientific">Synechocystis sp. (strain ATCC 27184 / PCC 6803 / Kazusa)</name>
    <dbReference type="NCBI Taxonomy" id="1111708"/>
    <lineage>
        <taxon>Bacteria</taxon>
        <taxon>Bacillati</taxon>
        <taxon>Cyanobacteriota</taxon>
        <taxon>Cyanophyceae</taxon>
        <taxon>Synechococcales</taxon>
        <taxon>Merismopediaceae</taxon>
        <taxon>Synechocystis</taxon>
    </lineage>
</organism>
<name>UREF_SYNY3</name>
<gene>
    <name evidence="1" type="primary">ureF</name>
    <name type="ordered locus">slr1899</name>
</gene>
<proteinExistence type="inferred from homology"/>
<reference key="1">
    <citation type="journal article" date="1996" name="DNA Res.">
        <title>Sequence analysis of the genome of the unicellular cyanobacterium Synechocystis sp. strain PCC6803. II. Sequence determination of the entire genome and assignment of potential protein-coding regions.</title>
        <authorList>
            <person name="Kaneko T."/>
            <person name="Sato S."/>
            <person name="Kotani H."/>
            <person name="Tanaka A."/>
            <person name="Asamizu E."/>
            <person name="Nakamura Y."/>
            <person name="Miyajima N."/>
            <person name="Hirosawa M."/>
            <person name="Sugiura M."/>
            <person name="Sasamoto S."/>
            <person name="Kimura T."/>
            <person name="Hosouchi T."/>
            <person name="Matsuno A."/>
            <person name="Muraki A."/>
            <person name="Nakazaki N."/>
            <person name="Naruo K."/>
            <person name="Okumura S."/>
            <person name="Shimpo S."/>
            <person name="Takeuchi C."/>
            <person name="Wada T."/>
            <person name="Watanabe A."/>
            <person name="Yamada M."/>
            <person name="Yasuda M."/>
            <person name="Tabata S."/>
        </authorList>
    </citation>
    <scope>NUCLEOTIDE SEQUENCE [LARGE SCALE GENOMIC DNA]</scope>
    <source>
        <strain>ATCC 27184 / PCC 6803 / Kazusa</strain>
    </source>
</reference>
<comment type="function">
    <text evidence="1">Required for maturation of urease via the functional incorporation of the urease nickel metallocenter.</text>
</comment>
<comment type="subunit">
    <text evidence="1">UreD, UreF and UreG form a complex that acts as a GTP-hydrolysis-dependent molecular chaperone, activating the urease apoprotein by helping to assemble the nickel containing metallocenter of UreC. The UreE protein probably delivers the nickel.</text>
</comment>
<comment type="subcellular location">
    <subcellularLocation>
        <location evidence="1">Cytoplasm</location>
    </subcellularLocation>
</comment>
<comment type="similarity">
    <text evidence="1">Belongs to the UreF family.</text>
</comment>
<comment type="sequence caution" evidence="2">
    <conflict type="erroneous initiation">
        <sequence resource="EMBL-CDS" id="BAA17357"/>
    </conflict>
</comment>
<keyword id="KW-0143">Chaperone</keyword>
<keyword id="KW-0963">Cytoplasm</keyword>
<keyword id="KW-0996">Nickel insertion</keyword>
<keyword id="KW-1185">Reference proteome</keyword>
<accession>P73327</accession>
<protein>
    <recommendedName>
        <fullName evidence="1">Urease accessory protein UreF</fullName>
    </recommendedName>
</protein>
<feature type="chain" id="PRO_0000067655" description="Urease accessory protein UreF">
    <location>
        <begin position="1"/>
        <end position="236"/>
    </location>
</feature>
<evidence type="ECO:0000255" key="1">
    <source>
        <dbReference type="HAMAP-Rule" id="MF_01385"/>
    </source>
</evidence>
<evidence type="ECO:0000305" key="2"/>